<feature type="chain" id="PRO_0000261754" description="Large ribosomal subunit protein uL13">
    <location>
        <begin position="1"/>
        <end position="143"/>
    </location>
</feature>
<accession>Q9JQM8</accession>
<accession>A1IPK1</accession>
<comment type="function">
    <text evidence="1">This protein is one of the early assembly proteins of the 50S ribosomal subunit, although it is not seen to bind rRNA by itself. It is important during the early stages of 50S assembly.</text>
</comment>
<comment type="subunit">
    <text evidence="1">Part of the 50S ribosomal subunit.</text>
</comment>
<comment type="similarity">
    <text evidence="1">Belongs to the universal ribosomal protein uL13 family.</text>
</comment>
<name>RL13_NEIMA</name>
<evidence type="ECO:0000255" key="1">
    <source>
        <dbReference type="HAMAP-Rule" id="MF_01366"/>
    </source>
</evidence>
<evidence type="ECO:0000305" key="2"/>
<keyword id="KW-0687">Ribonucleoprotein</keyword>
<keyword id="KW-0689">Ribosomal protein</keyword>
<sequence length="143" mass="16222">MKTFSAKPHEVKREWFVIDAQDKVLGRVAAEVASRLRGKHKPEYTPHVDTGDYIIVINADKLRVTGAKFEDKKYFRHSGFPGGIYERTFREMQEQFPGRALEQAVKGMLPKGPLGYAMIKKLKVYAGAEHAHAAQQPKVLELK</sequence>
<protein>
    <recommendedName>
        <fullName evidence="1">Large ribosomal subunit protein uL13</fullName>
    </recommendedName>
    <alternativeName>
        <fullName evidence="2">50S ribosomal protein L13</fullName>
    </alternativeName>
</protein>
<gene>
    <name evidence="1" type="primary">rplM</name>
    <name type="ordered locus">NMA0378</name>
</gene>
<reference key="1">
    <citation type="journal article" date="2000" name="Nature">
        <title>Complete DNA sequence of a serogroup A strain of Neisseria meningitidis Z2491.</title>
        <authorList>
            <person name="Parkhill J."/>
            <person name="Achtman M."/>
            <person name="James K.D."/>
            <person name="Bentley S.D."/>
            <person name="Churcher C.M."/>
            <person name="Klee S.R."/>
            <person name="Morelli G."/>
            <person name="Basham D."/>
            <person name="Brown D."/>
            <person name="Chillingworth T."/>
            <person name="Davies R.M."/>
            <person name="Davis P."/>
            <person name="Devlin K."/>
            <person name="Feltwell T."/>
            <person name="Hamlin N."/>
            <person name="Holroyd S."/>
            <person name="Jagels K."/>
            <person name="Leather S."/>
            <person name="Moule S."/>
            <person name="Mungall K.L."/>
            <person name="Quail M.A."/>
            <person name="Rajandream M.A."/>
            <person name="Rutherford K.M."/>
            <person name="Simmonds M."/>
            <person name="Skelton J."/>
            <person name="Whitehead S."/>
            <person name="Spratt B.G."/>
            <person name="Barrell B.G."/>
        </authorList>
    </citation>
    <scope>NUCLEOTIDE SEQUENCE [LARGE SCALE GENOMIC DNA]</scope>
    <source>
        <strain>DSM 15465 / Z2491</strain>
    </source>
</reference>
<dbReference type="EMBL" id="AL157959">
    <property type="protein sequence ID" value="CAM07671.1"/>
    <property type="molecule type" value="Genomic_DNA"/>
</dbReference>
<dbReference type="PIR" id="B81012">
    <property type="entry name" value="B81012"/>
</dbReference>
<dbReference type="RefSeq" id="WP_002215010.1">
    <property type="nucleotide sequence ID" value="NC_003116.1"/>
</dbReference>
<dbReference type="SMR" id="Q9JQM8"/>
<dbReference type="EnsemblBacteria" id="CAM07671">
    <property type="protein sequence ID" value="CAM07671"/>
    <property type="gene ID" value="NMA0378"/>
</dbReference>
<dbReference type="GeneID" id="93386984"/>
<dbReference type="KEGG" id="nma:NMA0378"/>
<dbReference type="HOGENOM" id="CLU_082184_2_2_4"/>
<dbReference type="Proteomes" id="UP000000626">
    <property type="component" value="Chromosome"/>
</dbReference>
<dbReference type="GO" id="GO:0022625">
    <property type="term" value="C:cytosolic large ribosomal subunit"/>
    <property type="evidence" value="ECO:0007669"/>
    <property type="project" value="TreeGrafter"/>
</dbReference>
<dbReference type="GO" id="GO:0003729">
    <property type="term" value="F:mRNA binding"/>
    <property type="evidence" value="ECO:0007669"/>
    <property type="project" value="TreeGrafter"/>
</dbReference>
<dbReference type="GO" id="GO:0003735">
    <property type="term" value="F:structural constituent of ribosome"/>
    <property type="evidence" value="ECO:0007669"/>
    <property type="project" value="InterPro"/>
</dbReference>
<dbReference type="GO" id="GO:0017148">
    <property type="term" value="P:negative regulation of translation"/>
    <property type="evidence" value="ECO:0007669"/>
    <property type="project" value="TreeGrafter"/>
</dbReference>
<dbReference type="GO" id="GO:0006412">
    <property type="term" value="P:translation"/>
    <property type="evidence" value="ECO:0007669"/>
    <property type="project" value="UniProtKB-UniRule"/>
</dbReference>
<dbReference type="CDD" id="cd00392">
    <property type="entry name" value="Ribosomal_L13"/>
    <property type="match status" value="1"/>
</dbReference>
<dbReference type="FunFam" id="3.90.1180.10:FF:000001">
    <property type="entry name" value="50S ribosomal protein L13"/>
    <property type="match status" value="1"/>
</dbReference>
<dbReference type="Gene3D" id="3.90.1180.10">
    <property type="entry name" value="Ribosomal protein L13"/>
    <property type="match status" value="1"/>
</dbReference>
<dbReference type="HAMAP" id="MF_01366">
    <property type="entry name" value="Ribosomal_uL13"/>
    <property type="match status" value="1"/>
</dbReference>
<dbReference type="InterPro" id="IPR005822">
    <property type="entry name" value="Ribosomal_uL13"/>
</dbReference>
<dbReference type="InterPro" id="IPR005823">
    <property type="entry name" value="Ribosomal_uL13_bac-type"/>
</dbReference>
<dbReference type="InterPro" id="IPR036899">
    <property type="entry name" value="Ribosomal_uL13_sf"/>
</dbReference>
<dbReference type="NCBIfam" id="TIGR01066">
    <property type="entry name" value="rplM_bact"/>
    <property type="match status" value="1"/>
</dbReference>
<dbReference type="PANTHER" id="PTHR11545:SF2">
    <property type="entry name" value="LARGE RIBOSOMAL SUBUNIT PROTEIN UL13M"/>
    <property type="match status" value="1"/>
</dbReference>
<dbReference type="PANTHER" id="PTHR11545">
    <property type="entry name" value="RIBOSOMAL PROTEIN L13"/>
    <property type="match status" value="1"/>
</dbReference>
<dbReference type="Pfam" id="PF00572">
    <property type="entry name" value="Ribosomal_L13"/>
    <property type="match status" value="1"/>
</dbReference>
<dbReference type="PIRSF" id="PIRSF002181">
    <property type="entry name" value="Ribosomal_L13"/>
    <property type="match status" value="1"/>
</dbReference>
<dbReference type="SUPFAM" id="SSF52161">
    <property type="entry name" value="Ribosomal protein L13"/>
    <property type="match status" value="1"/>
</dbReference>
<proteinExistence type="inferred from homology"/>
<organism>
    <name type="scientific">Neisseria meningitidis serogroup A / serotype 4A (strain DSM 15465 / Z2491)</name>
    <dbReference type="NCBI Taxonomy" id="122587"/>
    <lineage>
        <taxon>Bacteria</taxon>
        <taxon>Pseudomonadati</taxon>
        <taxon>Pseudomonadota</taxon>
        <taxon>Betaproteobacteria</taxon>
        <taxon>Neisseriales</taxon>
        <taxon>Neisseriaceae</taxon>
        <taxon>Neisseria</taxon>
    </lineage>
</organism>